<accession>A6BM46</accession>
<accession>B7ZI91</accession>
<gene>
    <name evidence="1" type="primary">rpl20</name>
</gene>
<organism>
    <name type="scientific">Gnetum parvifolium</name>
    <name type="common">Small-leaved jointfir</name>
    <name type="synonym">Gnetum scandens var. parvifolium</name>
    <dbReference type="NCBI Taxonomy" id="33153"/>
    <lineage>
        <taxon>Eukaryota</taxon>
        <taxon>Viridiplantae</taxon>
        <taxon>Streptophyta</taxon>
        <taxon>Embryophyta</taxon>
        <taxon>Tracheophyta</taxon>
        <taxon>Spermatophyta</taxon>
        <taxon>Gnetopsida</taxon>
        <taxon>Gnetidae</taxon>
        <taxon>Gnetales</taxon>
        <taxon>Gnetaceae</taxon>
        <taxon>Gnetum</taxon>
    </lineage>
</organism>
<geneLocation type="chloroplast"/>
<name>RK20_GNEPA</name>
<sequence>MTRVKRGFIARRRRNKILTFASGFQGSHSKQFRVAKQQKKRALISAERDRMKRKRDFRRLWIARINAAVRFSGLSYSQFVYCMYKNRLSQNRKNLAQIATLCTPFFSTFSQKIMT</sequence>
<comment type="function">
    <text evidence="1">Binds directly to 23S ribosomal RNA and is necessary for the in vitro assembly process of the 50S ribosomal subunit. It is not involved in the protein synthesizing functions of that subunit.</text>
</comment>
<comment type="subcellular location">
    <subcellularLocation>
        <location>Plastid</location>
        <location>Chloroplast</location>
    </subcellularLocation>
</comment>
<comment type="similarity">
    <text evidence="1">Belongs to the bacterial ribosomal protein bL20 family.</text>
</comment>
<dbReference type="EMBL" id="AB295942">
    <property type="protein sequence ID" value="BAF64891.1"/>
    <property type="molecule type" value="Genomic_DNA"/>
</dbReference>
<dbReference type="EMBL" id="AP009569">
    <property type="protein sequence ID" value="BAH11271.1"/>
    <property type="molecule type" value="Genomic_DNA"/>
</dbReference>
<dbReference type="RefSeq" id="YP_002519760.1">
    <property type="nucleotide sequence ID" value="NC_011942.1"/>
</dbReference>
<dbReference type="SMR" id="A6BM46"/>
<dbReference type="GeneID" id="7368167"/>
<dbReference type="GO" id="GO:0009507">
    <property type="term" value="C:chloroplast"/>
    <property type="evidence" value="ECO:0007669"/>
    <property type="project" value="UniProtKB-SubCell"/>
</dbReference>
<dbReference type="GO" id="GO:1990904">
    <property type="term" value="C:ribonucleoprotein complex"/>
    <property type="evidence" value="ECO:0007669"/>
    <property type="project" value="UniProtKB-KW"/>
</dbReference>
<dbReference type="GO" id="GO:0005840">
    <property type="term" value="C:ribosome"/>
    <property type="evidence" value="ECO:0007669"/>
    <property type="project" value="UniProtKB-KW"/>
</dbReference>
<dbReference type="GO" id="GO:0019843">
    <property type="term" value="F:rRNA binding"/>
    <property type="evidence" value="ECO:0007669"/>
    <property type="project" value="UniProtKB-UniRule"/>
</dbReference>
<dbReference type="GO" id="GO:0003735">
    <property type="term" value="F:structural constituent of ribosome"/>
    <property type="evidence" value="ECO:0007669"/>
    <property type="project" value="InterPro"/>
</dbReference>
<dbReference type="GO" id="GO:0000027">
    <property type="term" value="P:ribosomal large subunit assembly"/>
    <property type="evidence" value="ECO:0007669"/>
    <property type="project" value="UniProtKB-UniRule"/>
</dbReference>
<dbReference type="GO" id="GO:0006412">
    <property type="term" value="P:translation"/>
    <property type="evidence" value="ECO:0007669"/>
    <property type="project" value="InterPro"/>
</dbReference>
<dbReference type="CDD" id="cd07026">
    <property type="entry name" value="Ribosomal_L20"/>
    <property type="match status" value="1"/>
</dbReference>
<dbReference type="Gene3D" id="6.10.160.10">
    <property type="match status" value="1"/>
</dbReference>
<dbReference type="Gene3D" id="1.10.1900.20">
    <property type="entry name" value="Ribosomal protein L20"/>
    <property type="match status" value="1"/>
</dbReference>
<dbReference type="HAMAP" id="MF_00382">
    <property type="entry name" value="Ribosomal_bL20"/>
    <property type="match status" value="1"/>
</dbReference>
<dbReference type="InterPro" id="IPR005813">
    <property type="entry name" value="Ribosomal_bL20"/>
</dbReference>
<dbReference type="InterPro" id="IPR049946">
    <property type="entry name" value="RIBOSOMAL_L20_CS"/>
</dbReference>
<dbReference type="InterPro" id="IPR035566">
    <property type="entry name" value="Ribosomal_protein_bL20_C"/>
</dbReference>
<dbReference type="NCBIfam" id="TIGR01032">
    <property type="entry name" value="rplT_bact"/>
    <property type="match status" value="1"/>
</dbReference>
<dbReference type="PANTHER" id="PTHR10986">
    <property type="entry name" value="39S RIBOSOMAL PROTEIN L20"/>
    <property type="match status" value="1"/>
</dbReference>
<dbReference type="Pfam" id="PF00453">
    <property type="entry name" value="Ribosomal_L20"/>
    <property type="match status" value="1"/>
</dbReference>
<dbReference type="PRINTS" id="PR00062">
    <property type="entry name" value="RIBOSOMALL20"/>
</dbReference>
<dbReference type="SUPFAM" id="SSF74731">
    <property type="entry name" value="Ribosomal protein L20"/>
    <property type="match status" value="1"/>
</dbReference>
<dbReference type="PROSITE" id="PS00937">
    <property type="entry name" value="RIBOSOMAL_L20"/>
    <property type="match status" value="1"/>
</dbReference>
<keyword id="KW-0150">Chloroplast</keyword>
<keyword id="KW-0934">Plastid</keyword>
<keyword id="KW-0687">Ribonucleoprotein</keyword>
<keyword id="KW-0689">Ribosomal protein</keyword>
<keyword id="KW-0694">RNA-binding</keyword>
<keyword id="KW-0699">rRNA-binding</keyword>
<evidence type="ECO:0000255" key="1">
    <source>
        <dbReference type="HAMAP-Rule" id="MF_00382"/>
    </source>
</evidence>
<evidence type="ECO:0000305" key="2"/>
<protein>
    <recommendedName>
        <fullName evidence="1">Large ribosomal subunit protein bL20c</fullName>
    </recommendedName>
    <alternativeName>
        <fullName evidence="2">50S ribosomal protein L20, chloroplastic</fullName>
    </alternativeName>
</protein>
<proteinExistence type="inferred from homology"/>
<reference key="1">
    <citation type="journal article" date="2007" name="Mol. Biol. Evol.">
        <title>Chloroplast genome (cpDNA) of Cycas taitungensis and 56 cp protein-coding genes of Gnetum parvifolium: insights into cpDNA evolution and phylogeny of extant seed plants.</title>
        <authorList>
            <person name="Wu C.-S."/>
            <person name="Wang Y.-N."/>
            <person name="Liu S.-M."/>
            <person name="Chaw S.-M."/>
        </authorList>
    </citation>
    <scope>NUCLEOTIDE SEQUENCE [LARGE SCALE GENOMIC DNA]</scope>
</reference>
<reference key="2">
    <citation type="journal article" date="2009" name="Mol. Phylogenet. Evol.">
        <title>Evolution of reduced and compact chloroplast genomes (cpDNAs) in gnetophytes: Selection toward a lower-cost strategy.</title>
        <authorList>
            <person name="Wu C.-S."/>
            <person name="Lai Y.-T."/>
            <person name="Lin C.-P."/>
            <person name="Wang Y.-N."/>
            <person name="Chaw S.-M."/>
        </authorList>
    </citation>
    <scope>NUCLEOTIDE SEQUENCE [LARGE SCALE GENOMIC DNA]</scope>
</reference>
<feature type="chain" id="PRO_0000355504" description="Large ribosomal subunit protein bL20c">
    <location>
        <begin position="1"/>
        <end position="115"/>
    </location>
</feature>